<proteinExistence type="inferred from homology"/>
<protein>
    <recommendedName>
        <fullName evidence="1">Large ribosomal subunit protein uL22</fullName>
    </recommendedName>
    <alternativeName>
        <fullName evidence="2">50S ribosomal protein L22</fullName>
    </alternativeName>
</protein>
<comment type="function">
    <text evidence="1">This protein binds specifically to 23S rRNA; its binding is stimulated by other ribosomal proteins, e.g. L4, L17, and L20. It is important during the early stages of 50S assembly. It makes multiple contacts with different domains of the 23S rRNA in the assembled 50S subunit and ribosome (By similarity).</text>
</comment>
<comment type="function">
    <text evidence="1">The globular domain of the protein is located near the polypeptide exit tunnel on the outside of the subunit, while an extended beta-hairpin is found that lines the wall of the exit tunnel in the center of the 70S ribosome.</text>
</comment>
<comment type="subunit">
    <text evidence="1">Part of the 50S ribosomal subunit.</text>
</comment>
<comment type="similarity">
    <text evidence="1">Belongs to the universal ribosomal protein uL22 family.</text>
</comment>
<accession>P0DE23</accession>
<accession>Q79YR8</accession>
<accession>Q7CFL3</accession>
<dbReference type="EMBL" id="BA000034">
    <property type="protein sequence ID" value="BAC63142.1"/>
    <property type="molecule type" value="Genomic_DNA"/>
</dbReference>
<dbReference type="RefSeq" id="WP_002986651.1">
    <property type="nucleotide sequence ID" value="NC_004606.1"/>
</dbReference>
<dbReference type="SMR" id="P0DE23"/>
<dbReference type="GeneID" id="83703909"/>
<dbReference type="KEGG" id="sps:SPs0047"/>
<dbReference type="HOGENOM" id="CLU_083987_3_3_9"/>
<dbReference type="GO" id="GO:0022625">
    <property type="term" value="C:cytosolic large ribosomal subunit"/>
    <property type="evidence" value="ECO:0007669"/>
    <property type="project" value="TreeGrafter"/>
</dbReference>
<dbReference type="GO" id="GO:0019843">
    <property type="term" value="F:rRNA binding"/>
    <property type="evidence" value="ECO:0007669"/>
    <property type="project" value="UniProtKB-UniRule"/>
</dbReference>
<dbReference type="GO" id="GO:0003735">
    <property type="term" value="F:structural constituent of ribosome"/>
    <property type="evidence" value="ECO:0007669"/>
    <property type="project" value="InterPro"/>
</dbReference>
<dbReference type="GO" id="GO:0006412">
    <property type="term" value="P:translation"/>
    <property type="evidence" value="ECO:0007669"/>
    <property type="project" value="UniProtKB-UniRule"/>
</dbReference>
<dbReference type="CDD" id="cd00336">
    <property type="entry name" value="Ribosomal_L22"/>
    <property type="match status" value="1"/>
</dbReference>
<dbReference type="FunFam" id="3.90.470.10:FF:000001">
    <property type="entry name" value="50S ribosomal protein L22"/>
    <property type="match status" value="1"/>
</dbReference>
<dbReference type="Gene3D" id="3.90.470.10">
    <property type="entry name" value="Ribosomal protein L22/L17"/>
    <property type="match status" value="1"/>
</dbReference>
<dbReference type="HAMAP" id="MF_01331_B">
    <property type="entry name" value="Ribosomal_uL22_B"/>
    <property type="match status" value="1"/>
</dbReference>
<dbReference type="InterPro" id="IPR001063">
    <property type="entry name" value="Ribosomal_uL22"/>
</dbReference>
<dbReference type="InterPro" id="IPR005727">
    <property type="entry name" value="Ribosomal_uL22_bac/chlpt-type"/>
</dbReference>
<dbReference type="InterPro" id="IPR047867">
    <property type="entry name" value="Ribosomal_uL22_bac/org-type"/>
</dbReference>
<dbReference type="InterPro" id="IPR018260">
    <property type="entry name" value="Ribosomal_uL22_CS"/>
</dbReference>
<dbReference type="InterPro" id="IPR036394">
    <property type="entry name" value="Ribosomal_uL22_sf"/>
</dbReference>
<dbReference type="NCBIfam" id="TIGR01044">
    <property type="entry name" value="rplV_bact"/>
    <property type="match status" value="1"/>
</dbReference>
<dbReference type="PANTHER" id="PTHR13501">
    <property type="entry name" value="CHLOROPLAST 50S RIBOSOMAL PROTEIN L22-RELATED"/>
    <property type="match status" value="1"/>
</dbReference>
<dbReference type="PANTHER" id="PTHR13501:SF8">
    <property type="entry name" value="LARGE RIBOSOMAL SUBUNIT PROTEIN UL22M"/>
    <property type="match status" value="1"/>
</dbReference>
<dbReference type="Pfam" id="PF00237">
    <property type="entry name" value="Ribosomal_L22"/>
    <property type="match status" value="1"/>
</dbReference>
<dbReference type="SUPFAM" id="SSF54843">
    <property type="entry name" value="Ribosomal protein L22"/>
    <property type="match status" value="1"/>
</dbReference>
<dbReference type="PROSITE" id="PS00464">
    <property type="entry name" value="RIBOSOMAL_L22"/>
    <property type="match status" value="1"/>
</dbReference>
<organism>
    <name type="scientific">Streptococcus pyogenes serotype M3 (strain SSI-1)</name>
    <dbReference type="NCBI Taxonomy" id="193567"/>
    <lineage>
        <taxon>Bacteria</taxon>
        <taxon>Bacillati</taxon>
        <taxon>Bacillota</taxon>
        <taxon>Bacilli</taxon>
        <taxon>Lactobacillales</taxon>
        <taxon>Streptococcaceae</taxon>
        <taxon>Streptococcus</taxon>
    </lineage>
</organism>
<keyword id="KW-0687">Ribonucleoprotein</keyword>
<keyword id="KW-0689">Ribosomal protein</keyword>
<keyword id="KW-0694">RNA-binding</keyword>
<keyword id="KW-0699">rRNA-binding</keyword>
<feature type="chain" id="PRO_0000411501" description="Large ribosomal subunit protein uL22">
    <location>
        <begin position="1"/>
        <end position="114"/>
    </location>
</feature>
<reference key="1">
    <citation type="journal article" date="2003" name="Genome Res.">
        <title>Genome sequence of an M3 strain of Streptococcus pyogenes reveals a large-scale genomic rearrangement in invasive strains and new insights into phage evolution.</title>
        <authorList>
            <person name="Nakagawa I."/>
            <person name="Kurokawa K."/>
            <person name="Yamashita A."/>
            <person name="Nakata M."/>
            <person name="Tomiyasu Y."/>
            <person name="Okahashi N."/>
            <person name="Kawabata S."/>
            <person name="Yamazaki K."/>
            <person name="Shiba T."/>
            <person name="Yasunaga T."/>
            <person name="Hayashi H."/>
            <person name="Hattori M."/>
            <person name="Hamada S."/>
        </authorList>
    </citation>
    <scope>NUCLEOTIDE SEQUENCE [LARGE SCALE GENOMIC DNA]</scope>
    <source>
        <strain>SSI-1</strain>
    </source>
</reference>
<sequence length="114" mass="12431">MAEITSAKAMARTVRVSPRKTRLVLDLIRGKKVADAIAILKFTPNKAARVIEKTLNSAIANAENNFGLEKANLVVSETFANEGPTMKRFRPRAKGSASPINKRTTHVTVVVSEK</sequence>
<evidence type="ECO:0000255" key="1">
    <source>
        <dbReference type="HAMAP-Rule" id="MF_01331"/>
    </source>
</evidence>
<evidence type="ECO:0000305" key="2"/>
<name>RL22_STRPQ</name>
<gene>
    <name evidence="1" type="primary">rplV</name>
    <name type="ordered locus">SPs0047</name>
</gene>